<protein>
    <recommendedName>
        <fullName evidence="2">Purine nucleoside phosphorylase DeoD-type</fullName>
        <shortName evidence="2">PNP</shortName>
        <ecNumber evidence="2">2.4.2.1</ecNumber>
    </recommendedName>
</protein>
<reference key="1">
    <citation type="submission" date="1996-04" db="EMBL/GenBank/DDBJ databases">
        <authorList>
            <person name="Vezina G."/>
            <person name="Sirois M."/>
            <person name="Clairoux N."/>
            <person name="Boissinot M."/>
        </authorList>
    </citation>
    <scope>NUCLEOTIDE SEQUENCE [GENOMIC DNA]</scope>
    <source>
        <strain>ATCC 27088 / DSM 13472 / CCM 5869 / S4074 / Serotype 1</strain>
    </source>
</reference>
<feature type="chain" id="PRO_0000063113" description="Purine nucleoside phosphorylase DeoD-type">
    <location>
        <begin position="1"/>
        <end position="240"/>
    </location>
</feature>
<feature type="active site" description="Proton donor" evidence="2">
    <location>
        <position position="205"/>
    </location>
</feature>
<feature type="binding site" evidence="1">
    <location>
        <position position="5"/>
    </location>
    <ligand>
        <name>a purine D-ribonucleoside</name>
        <dbReference type="ChEBI" id="CHEBI:142355"/>
        <note>ligand shared between dimeric partners</note>
    </ligand>
</feature>
<feature type="binding site" description="in other chain" evidence="1">
    <location>
        <position position="21"/>
    </location>
    <ligand>
        <name>phosphate</name>
        <dbReference type="ChEBI" id="CHEBI:43474"/>
        <note>ligand shared between dimeric partners</note>
    </ligand>
</feature>
<feature type="binding site" description="in other chain" evidence="1">
    <location>
        <position position="25"/>
    </location>
    <ligand>
        <name>phosphate</name>
        <dbReference type="ChEBI" id="CHEBI:43474"/>
        <note>ligand shared between dimeric partners</note>
    </ligand>
</feature>
<feature type="binding site" evidence="1">
    <location>
        <position position="44"/>
    </location>
    <ligand>
        <name>phosphate</name>
        <dbReference type="ChEBI" id="CHEBI:43474"/>
        <note>ligand shared between dimeric partners</note>
    </ligand>
</feature>
<feature type="binding site" description="in other chain" evidence="1">
    <location>
        <begin position="88"/>
        <end position="91"/>
    </location>
    <ligand>
        <name>phosphate</name>
        <dbReference type="ChEBI" id="CHEBI:43474"/>
        <note>ligand shared between dimeric partners</note>
    </ligand>
</feature>
<feature type="binding site" description="in other chain" evidence="1">
    <location>
        <begin position="180"/>
        <end position="182"/>
    </location>
    <ligand>
        <name>a purine D-ribonucleoside</name>
        <dbReference type="ChEBI" id="CHEBI:142355"/>
        <note>ligand shared between dimeric partners</note>
    </ligand>
</feature>
<feature type="binding site" description="in other chain" evidence="1">
    <location>
        <begin position="204"/>
        <end position="205"/>
    </location>
    <ligand>
        <name>a purine D-ribonucleoside</name>
        <dbReference type="ChEBI" id="CHEBI:142355"/>
        <note>ligand shared between dimeric partners</note>
    </ligand>
</feature>
<feature type="site" description="Important for catalytic activity" evidence="2">
    <location>
        <position position="218"/>
    </location>
</feature>
<proteinExistence type="inferred from homology"/>
<keyword id="KW-0328">Glycosyltransferase</keyword>
<keyword id="KW-0808">Transferase</keyword>
<dbReference type="EC" id="2.4.2.1" evidence="2"/>
<dbReference type="EMBL" id="U55016">
    <property type="protein sequence ID" value="AAB51435.1"/>
    <property type="molecule type" value="Genomic_DNA"/>
</dbReference>
<dbReference type="RefSeq" id="WP_005597795.1">
    <property type="nucleotide sequence ID" value="NZ_LS483358.1"/>
</dbReference>
<dbReference type="SMR" id="P94164"/>
<dbReference type="GeneID" id="48599241"/>
<dbReference type="OMA" id="PQCLLCG"/>
<dbReference type="GO" id="GO:0005829">
    <property type="term" value="C:cytosol"/>
    <property type="evidence" value="ECO:0007669"/>
    <property type="project" value="TreeGrafter"/>
</dbReference>
<dbReference type="GO" id="GO:0004731">
    <property type="term" value="F:purine-nucleoside phosphorylase activity"/>
    <property type="evidence" value="ECO:0007669"/>
    <property type="project" value="UniProtKB-UniRule"/>
</dbReference>
<dbReference type="GO" id="GO:0006152">
    <property type="term" value="P:purine nucleoside catabolic process"/>
    <property type="evidence" value="ECO:0007669"/>
    <property type="project" value="TreeGrafter"/>
</dbReference>
<dbReference type="CDD" id="cd09006">
    <property type="entry name" value="PNP_EcPNPI-like"/>
    <property type="match status" value="1"/>
</dbReference>
<dbReference type="FunFam" id="3.40.50.1580:FF:000002">
    <property type="entry name" value="Purine nucleoside phosphorylase DeoD-type"/>
    <property type="match status" value="1"/>
</dbReference>
<dbReference type="Gene3D" id="3.40.50.1580">
    <property type="entry name" value="Nucleoside phosphorylase domain"/>
    <property type="match status" value="1"/>
</dbReference>
<dbReference type="HAMAP" id="MF_01627">
    <property type="entry name" value="Pur_nucleosid_phosp"/>
    <property type="match status" value="1"/>
</dbReference>
<dbReference type="InterPro" id="IPR004402">
    <property type="entry name" value="DeoD-type"/>
</dbReference>
<dbReference type="InterPro" id="IPR018016">
    <property type="entry name" value="Nucleoside_phosphorylase_CS"/>
</dbReference>
<dbReference type="InterPro" id="IPR000845">
    <property type="entry name" value="Nucleoside_phosphorylase_d"/>
</dbReference>
<dbReference type="InterPro" id="IPR035994">
    <property type="entry name" value="Nucleoside_phosphorylase_sf"/>
</dbReference>
<dbReference type="NCBIfam" id="TIGR00107">
    <property type="entry name" value="deoD"/>
    <property type="match status" value="1"/>
</dbReference>
<dbReference type="NCBIfam" id="NF004489">
    <property type="entry name" value="PRK05819.1"/>
    <property type="match status" value="1"/>
</dbReference>
<dbReference type="NCBIfam" id="NF009914">
    <property type="entry name" value="PRK13374.1"/>
    <property type="match status" value="1"/>
</dbReference>
<dbReference type="PANTHER" id="PTHR43691:SF2">
    <property type="entry name" value="PURINE NUCLEOSIDE PHOSPHORYLASE DEOD-TYPE"/>
    <property type="match status" value="1"/>
</dbReference>
<dbReference type="PANTHER" id="PTHR43691">
    <property type="entry name" value="URIDINE PHOSPHORYLASE"/>
    <property type="match status" value="1"/>
</dbReference>
<dbReference type="Pfam" id="PF01048">
    <property type="entry name" value="PNP_UDP_1"/>
    <property type="match status" value="1"/>
</dbReference>
<dbReference type="SUPFAM" id="SSF53167">
    <property type="entry name" value="Purine and uridine phosphorylases"/>
    <property type="match status" value="1"/>
</dbReference>
<dbReference type="PROSITE" id="PS01232">
    <property type="entry name" value="PNP_UDP_1"/>
    <property type="match status" value="1"/>
</dbReference>
<organism>
    <name type="scientific">Actinobacillus pleuropneumoniae</name>
    <name type="common">Haemophilus pleuropneumoniae</name>
    <dbReference type="NCBI Taxonomy" id="715"/>
    <lineage>
        <taxon>Bacteria</taxon>
        <taxon>Pseudomonadati</taxon>
        <taxon>Pseudomonadota</taxon>
        <taxon>Gammaproteobacteria</taxon>
        <taxon>Pasteurellales</taxon>
        <taxon>Pasteurellaceae</taxon>
        <taxon>Actinobacillus</taxon>
    </lineage>
</organism>
<sequence length="240" mass="26015">MATPHINAPEGAFADVVLMPGDPLRAKYIAETFLEDAVQVTDVRNMFGYTGTYKGRRISVMGHGMGIPSCSIYAKELITEYGVKKIIRVGSCGAVRQDVKVRDVIIGSGACTDSKVNRIRFRDNDFAAISDFDMTLAAVQAAKQKGIAARVGNLFSADLFYTPDVEMFDVMEKYGILGVEMEAAGIYAVAAEYGAKALAICTVSDHIRTGEQTSSEERQLTFNDMITIALESVLIGDKAE</sequence>
<name>DEOD_ACTPL</name>
<comment type="function">
    <text evidence="2">Catalyzes the reversible phosphorolytic breakdown of the N-glycosidic bond in the beta-(deoxy)ribonucleoside molecules, with the formation of the corresponding free purine bases and pentose-1-phosphate.</text>
</comment>
<comment type="catalytic activity">
    <reaction evidence="2">
        <text>a purine D-ribonucleoside + phosphate = a purine nucleobase + alpha-D-ribose 1-phosphate</text>
        <dbReference type="Rhea" id="RHEA:19805"/>
        <dbReference type="ChEBI" id="CHEBI:26386"/>
        <dbReference type="ChEBI" id="CHEBI:43474"/>
        <dbReference type="ChEBI" id="CHEBI:57720"/>
        <dbReference type="ChEBI" id="CHEBI:142355"/>
        <dbReference type="EC" id="2.4.2.1"/>
    </reaction>
</comment>
<comment type="catalytic activity">
    <reaction evidence="2">
        <text>a purine 2'-deoxy-D-ribonucleoside + phosphate = a purine nucleobase + 2-deoxy-alpha-D-ribose 1-phosphate</text>
        <dbReference type="Rhea" id="RHEA:36431"/>
        <dbReference type="ChEBI" id="CHEBI:26386"/>
        <dbReference type="ChEBI" id="CHEBI:43474"/>
        <dbReference type="ChEBI" id="CHEBI:57259"/>
        <dbReference type="ChEBI" id="CHEBI:142361"/>
        <dbReference type="EC" id="2.4.2.1"/>
    </reaction>
</comment>
<comment type="subunit">
    <text evidence="2">Homohexamer; trimer of homodimers.</text>
</comment>
<comment type="similarity">
    <text evidence="2">Belongs to the PNP/UDP phosphorylase family.</text>
</comment>
<accession>P94164</accession>
<gene>
    <name evidence="2" type="primary">deoD</name>
</gene>
<evidence type="ECO:0000250" key="1">
    <source>
        <dbReference type="UniProtKB" id="P50389"/>
    </source>
</evidence>
<evidence type="ECO:0000255" key="2">
    <source>
        <dbReference type="HAMAP-Rule" id="MF_01627"/>
    </source>
</evidence>